<feature type="chain" id="PRO_0000183970" description="Synaptotagmin-11">
    <location>
        <begin position="1"/>
        <end position="430"/>
    </location>
</feature>
<feature type="topological domain" description="Vesicular" evidence="3">
    <location>
        <begin position="1"/>
        <end position="15"/>
    </location>
</feature>
<feature type="transmembrane region" description="Helical" evidence="3">
    <location>
        <begin position="16"/>
        <end position="36"/>
    </location>
</feature>
<feature type="topological domain" description="Cytoplasmic" evidence="3">
    <location>
        <begin position="37"/>
        <end position="430"/>
    </location>
</feature>
<feature type="domain" description="C2 1" evidence="4">
    <location>
        <begin position="156"/>
        <end position="278"/>
    </location>
</feature>
<feature type="domain" description="C2 2" evidence="4">
    <location>
        <begin position="290"/>
        <end position="425"/>
    </location>
</feature>
<feature type="region of interest" description="Disordered" evidence="5">
    <location>
        <begin position="79"/>
        <end position="120"/>
    </location>
</feature>
<feature type="region of interest" description="Disordered" evidence="5">
    <location>
        <begin position="132"/>
        <end position="152"/>
    </location>
</feature>
<feature type="compositionally biased region" description="Basic and acidic residues" evidence="5">
    <location>
        <begin position="79"/>
        <end position="90"/>
    </location>
</feature>
<feature type="compositionally biased region" description="Polar residues" evidence="5">
    <location>
        <begin position="134"/>
        <end position="150"/>
    </location>
</feature>
<feature type="binding site" evidence="4">
    <location>
        <position position="249"/>
    </location>
    <ligand>
        <name>Ca(2+)</name>
        <dbReference type="ChEBI" id="CHEBI:29108"/>
    </ligand>
</feature>
<feature type="binding site" evidence="4">
    <location>
        <position position="252"/>
    </location>
    <ligand>
        <name>Ca(2+)</name>
        <dbReference type="ChEBI" id="CHEBI:29108"/>
    </ligand>
</feature>
<feature type="binding site" evidence="4">
    <location>
        <position position="255"/>
    </location>
    <ligand>
        <name>Ca(2+)</name>
        <dbReference type="ChEBI" id="CHEBI:29108"/>
    </ligand>
</feature>
<feature type="modified residue" description="Phosphoserine" evidence="16">
    <location>
        <position position="133"/>
    </location>
</feature>
<feature type="sequence conflict" description="In Ref. 1; BAA85780." evidence="14" ref="1">
    <original>A</original>
    <variation>P</variation>
    <location>
        <position position="145"/>
    </location>
</feature>
<reference key="1">
    <citation type="journal article" date="1999" name="J. Biol. Chem.">
        <title>Conserved N-terminal cysteine motif is essential for homo- and heterodimer formation of synaptotagmins III, V, VI, and X.</title>
        <authorList>
            <person name="Fukuda M."/>
            <person name="Kanno E."/>
            <person name="Mikoshiba K."/>
        </authorList>
    </citation>
    <scope>NUCLEOTIDE SEQUENCE [MRNA]</scope>
    <source>
        <strain>ICR</strain>
        <tissue>Cerebellum</tissue>
    </source>
</reference>
<reference key="2">
    <citation type="journal article" date="2005" name="Science">
        <title>The transcriptional landscape of the mammalian genome.</title>
        <authorList>
            <person name="Carninci P."/>
            <person name="Kasukawa T."/>
            <person name="Katayama S."/>
            <person name="Gough J."/>
            <person name="Frith M.C."/>
            <person name="Maeda N."/>
            <person name="Oyama R."/>
            <person name="Ravasi T."/>
            <person name="Lenhard B."/>
            <person name="Wells C."/>
            <person name="Kodzius R."/>
            <person name="Shimokawa K."/>
            <person name="Bajic V.B."/>
            <person name="Brenner S.E."/>
            <person name="Batalov S."/>
            <person name="Forrest A.R."/>
            <person name="Zavolan M."/>
            <person name="Davis M.J."/>
            <person name="Wilming L.G."/>
            <person name="Aidinis V."/>
            <person name="Allen J.E."/>
            <person name="Ambesi-Impiombato A."/>
            <person name="Apweiler R."/>
            <person name="Aturaliya R.N."/>
            <person name="Bailey T.L."/>
            <person name="Bansal M."/>
            <person name="Baxter L."/>
            <person name="Beisel K.W."/>
            <person name="Bersano T."/>
            <person name="Bono H."/>
            <person name="Chalk A.M."/>
            <person name="Chiu K.P."/>
            <person name="Choudhary V."/>
            <person name="Christoffels A."/>
            <person name="Clutterbuck D.R."/>
            <person name="Crowe M.L."/>
            <person name="Dalla E."/>
            <person name="Dalrymple B.P."/>
            <person name="de Bono B."/>
            <person name="Della Gatta G."/>
            <person name="di Bernardo D."/>
            <person name="Down T."/>
            <person name="Engstrom P."/>
            <person name="Fagiolini M."/>
            <person name="Faulkner G."/>
            <person name="Fletcher C.F."/>
            <person name="Fukushima T."/>
            <person name="Furuno M."/>
            <person name="Futaki S."/>
            <person name="Gariboldi M."/>
            <person name="Georgii-Hemming P."/>
            <person name="Gingeras T.R."/>
            <person name="Gojobori T."/>
            <person name="Green R.E."/>
            <person name="Gustincich S."/>
            <person name="Harbers M."/>
            <person name="Hayashi Y."/>
            <person name="Hensch T.K."/>
            <person name="Hirokawa N."/>
            <person name="Hill D."/>
            <person name="Huminiecki L."/>
            <person name="Iacono M."/>
            <person name="Ikeo K."/>
            <person name="Iwama A."/>
            <person name="Ishikawa T."/>
            <person name="Jakt M."/>
            <person name="Kanapin A."/>
            <person name="Katoh M."/>
            <person name="Kawasawa Y."/>
            <person name="Kelso J."/>
            <person name="Kitamura H."/>
            <person name="Kitano H."/>
            <person name="Kollias G."/>
            <person name="Krishnan S.P."/>
            <person name="Kruger A."/>
            <person name="Kummerfeld S.K."/>
            <person name="Kurochkin I.V."/>
            <person name="Lareau L.F."/>
            <person name="Lazarevic D."/>
            <person name="Lipovich L."/>
            <person name="Liu J."/>
            <person name="Liuni S."/>
            <person name="McWilliam S."/>
            <person name="Madan Babu M."/>
            <person name="Madera M."/>
            <person name="Marchionni L."/>
            <person name="Matsuda H."/>
            <person name="Matsuzawa S."/>
            <person name="Miki H."/>
            <person name="Mignone F."/>
            <person name="Miyake S."/>
            <person name="Morris K."/>
            <person name="Mottagui-Tabar S."/>
            <person name="Mulder N."/>
            <person name="Nakano N."/>
            <person name="Nakauchi H."/>
            <person name="Ng P."/>
            <person name="Nilsson R."/>
            <person name="Nishiguchi S."/>
            <person name="Nishikawa S."/>
            <person name="Nori F."/>
            <person name="Ohara O."/>
            <person name="Okazaki Y."/>
            <person name="Orlando V."/>
            <person name="Pang K.C."/>
            <person name="Pavan W.J."/>
            <person name="Pavesi G."/>
            <person name="Pesole G."/>
            <person name="Petrovsky N."/>
            <person name="Piazza S."/>
            <person name="Reed J."/>
            <person name="Reid J.F."/>
            <person name="Ring B.Z."/>
            <person name="Ringwald M."/>
            <person name="Rost B."/>
            <person name="Ruan Y."/>
            <person name="Salzberg S.L."/>
            <person name="Sandelin A."/>
            <person name="Schneider C."/>
            <person name="Schoenbach C."/>
            <person name="Sekiguchi K."/>
            <person name="Semple C.A."/>
            <person name="Seno S."/>
            <person name="Sessa L."/>
            <person name="Sheng Y."/>
            <person name="Shibata Y."/>
            <person name="Shimada H."/>
            <person name="Shimada K."/>
            <person name="Silva D."/>
            <person name="Sinclair B."/>
            <person name="Sperling S."/>
            <person name="Stupka E."/>
            <person name="Sugiura K."/>
            <person name="Sultana R."/>
            <person name="Takenaka Y."/>
            <person name="Taki K."/>
            <person name="Tammoja K."/>
            <person name="Tan S.L."/>
            <person name="Tang S."/>
            <person name="Taylor M.S."/>
            <person name="Tegner J."/>
            <person name="Teichmann S.A."/>
            <person name="Ueda H.R."/>
            <person name="van Nimwegen E."/>
            <person name="Verardo R."/>
            <person name="Wei C.L."/>
            <person name="Yagi K."/>
            <person name="Yamanishi H."/>
            <person name="Zabarovsky E."/>
            <person name="Zhu S."/>
            <person name="Zimmer A."/>
            <person name="Hide W."/>
            <person name="Bult C."/>
            <person name="Grimmond S.M."/>
            <person name="Teasdale R.D."/>
            <person name="Liu E.T."/>
            <person name="Brusic V."/>
            <person name="Quackenbush J."/>
            <person name="Wahlestedt C."/>
            <person name="Mattick J.S."/>
            <person name="Hume D.A."/>
            <person name="Kai C."/>
            <person name="Sasaki D."/>
            <person name="Tomaru Y."/>
            <person name="Fukuda S."/>
            <person name="Kanamori-Katayama M."/>
            <person name="Suzuki M."/>
            <person name="Aoki J."/>
            <person name="Arakawa T."/>
            <person name="Iida J."/>
            <person name="Imamura K."/>
            <person name="Itoh M."/>
            <person name="Kato T."/>
            <person name="Kawaji H."/>
            <person name="Kawagashira N."/>
            <person name="Kawashima T."/>
            <person name="Kojima M."/>
            <person name="Kondo S."/>
            <person name="Konno H."/>
            <person name="Nakano K."/>
            <person name="Ninomiya N."/>
            <person name="Nishio T."/>
            <person name="Okada M."/>
            <person name="Plessy C."/>
            <person name="Shibata K."/>
            <person name="Shiraki T."/>
            <person name="Suzuki S."/>
            <person name="Tagami M."/>
            <person name="Waki K."/>
            <person name="Watahiki A."/>
            <person name="Okamura-Oho Y."/>
            <person name="Suzuki H."/>
            <person name="Kawai J."/>
            <person name="Hayashizaki Y."/>
        </authorList>
    </citation>
    <scope>NUCLEOTIDE SEQUENCE [LARGE SCALE MRNA]</scope>
</reference>
<reference key="3">
    <citation type="journal article" date="2004" name="Genome Res.">
        <title>The status, quality, and expansion of the NIH full-length cDNA project: the Mammalian Gene Collection (MGC).</title>
        <authorList>
            <consortium name="The MGC Project Team"/>
        </authorList>
    </citation>
    <scope>NUCLEOTIDE SEQUENCE [LARGE SCALE MRNA]</scope>
    <source>
        <strain>C57BL/6J</strain>
        <tissue>Brain</tissue>
    </source>
</reference>
<reference key="4">
    <citation type="journal article" date="2010" name="Cell">
        <title>A tissue-specific atlas of mouse protein phosphorylation and expression.</title>
        <authorList>
            <person name="Huttlin E.L."/>
            <person name="Jedrychowski M.P."/>
            <person name="Elias J.E."/>
            <person name="Goswami T."/>
            <person name="Rad R."/>
            <person name="Beausoleil S.A."/>
            <person name="Villen J."/>
            <person name="Haas W."/>
            <person name="Sowa M.E."/>
            <person name="Gygi S.P."/>
        </authorList>
    </citation>
    <scope>PHOSPHORYLATION [LARGE SCALE ANALYSIS] AT SER-133</scope>
    <scope>IDENTIFICATION BY MASS SPECTROMETRY [LARGE SCALE ANALYSIS]</scope>
    <source>
        <tissue>Brain</tissue>
    </source>
</reference>
<reference key="5">
    <citation type="journal article" date="2013" name="J. Immunol.">
        <title>Synaptotagmin XI regulates phagocytosis and cytokine secretion in macrophages.</title>
        <authorList>
            <person name="Arango Duque G."/>
            <person name="Fukuda M."/>
            <person name="Descoteaux A."/>
        </authorList>
    </citation>
    <scope>FUNCTION</scope>
    <scope>SUBCELLULAR LOCATION</scope>
    <scope>TISSUE SPECIFICITY</scope>
</reference>
<reference key="6">
    <citation type="journal article" date="2014" name="FEBS Lett.">
        <title>Synaptotagmin 11 interacts with components of the RNA-induced silencing complex RISC in clonal pancreatic beta-cells.</title>
        <authorList>
            <person name="Milochau A."/>
            <person name="Lagree V."/>
            <person name="Benassy M.N."/>
            <person name="Chaignepain S."/>
            <person name="Papin J."/>
            <person name="Garcia-Arcos I."/>
            <person name="Lajoix A."/>
            <person name="Monterrat C."/>
            <person name="Coudert L."/>
            <person name="Schmitter J.M."/>
            <person name="Ochoa B."/>
            <person name="Lang J."/>
        </authorList>
    </citation>
    <scope>INTERACTION WITH AGO2 AND SND1</scope>
</reference>
<reference key="7">
    <citation type="journal article" date="2016" name="Cell Death Differ.">
        <title>Injured astrocytes are repaired by Synaptotagmin XI-regulated lysosome exocytosis.</title>
        <authorList>
            <person name="Sreetama S.C."/>
            <person name="Takano T."/>
            <person name="Nedergaard M."/>
            <person name="Simon S.M."/>
            <person name="Jaiswal J.K."/>
        </authorList>
    </citation>
    <scope>FUNCTION</scope>
    <scope>SUBCELLULAR LOCATION</scope>
    <scope>TISSUE SPECIFICITY</scope>
</reference>
<reference key="8">
    <citation type="journal article" date="2016" name="Nat. Commun.">
        <title>The Parkinson's disease-associated genes ATP13A2 and SYT11 regulate autophagy via a common pathway.</title>
        <authorList>
            <person name="Bento C.F."/>
            <person name="Ashkenazi A."/>
            <person name="Jimenez-Sanchez M."/>
            <person name="Rubinsztein D.C."/>
        </authorList>
    </citation>
    <scope>FUNCTION</scope>
</reference>
<reference key="9">
    <citation type="journal article" date="2017" name="Glia">
        <title>Synaptotagmin-11 inhibits cytokine secretion and phagocytosis in microglia.</title>
        <authorList>
            <person name="Du C."/>
            <person name="Wang Y."/>
            <person name="Zhang F."/>
            <person name="Yan S."/>
            <person name="Guan Y."/>
            <person name="Gong X."/>
            <person name="Zhang T."/>
            <person name="Cui X."/>
            <person name="Wang X."/>
            <person name="Zhang C.X."/>
        </authorList>
    </citation>
    <scope>FUNCTION</scope>
    <scope>SUBCELLULAR LOCATION</scope>
    <scope>TISSUE SPECIFICITY</scope>
</reference>
<reference key="10">
    <citation type="journal article" date="2018" name="Nat. Commun.">
        <title>Synaptotagmin-11 is a critical mediator of parkin-linked neurotoxicity and Parkinson's disease-like pathology.</title>
        <authorList>
            <person name="Wang C."/>
            <person name="Kang X."/>
            <person name="Zhou L."/>
            <person name="Chai Z."/>
            <person name="Wu Q."/>
            <person name="Huang R."/>
            <person name="Xu H."/>
            <person name="Hu M."/>
            <person name="Sun X."/>
            <person name="Sun S."/>
            <person name="Li J."/>
            <person name="Jiao R."/>
            <person name="Zuo P."/>
            <person name="Zheng L."/>
            <person name="Yue Z."/>
            <person name="Zhou Z."/>
        </authorList>
    </citation>
    <scope>FUNCTION</scope>
    <scope>DISRUPTION PHENOTYPE</scope>
</reference>
<reference key="11">
    <citation type="journal article" date="2019" name="Genes Dev.">
        <title>Synaptotagmin-11 mediates a vesicle trafficking pathway that is essential for development and synaptic plasticity.</title>
        <authorList>
            <person name="Shimojo M."/>
            <person name="Madara J."/>
            <person name="Pankow S."/>
            <person name="Liu X."/>
            <person name="Yates J. III"/>
            <person name="Suedhof T.C."/>
            <person name="Maximov A."/>
        </authorList>
    </citation>
    <scope>FUNCTION</scope>
    <scope>SUBCELLULAR LOCATION</scope>
    <scope>DISRUPTION PHENOTYPE</scope>
    <scope>TISSUE SPECIFICITY</scope>
    <scope>DEVELOPMENTAL STAGE</scope>
    <scope>INTERACTION WITH KIF1A</scope>
</reference>
<evidence type="ECO:0000250" key="1">
    <source>
        <dbReference type="UniProtKB" id="O08835"/>
    </source>
</evidence>
<evidence type="ECO:0000250" key="2">
    <source>
        <dbReference type="UniProtKB" id="Q9BT88"/>
    </source>
</evidence>
<evidence type="ECO:0000255" key="3"/>
<evidence type="ECO:0000255" key="4">
    <source>
        <dbReference type="PROSITE-ProRule" id="PRU00041"/>
    </source>
</evidence>
<evidence type="ECO:0000256" key="5">
    <source>
        <dbReference type="SAM" id="MobiDB-lite"/>
    </source>
</evidence>
<evidence type="ECO:0000269" key="6">
    <source>
    </source>
</evidence>
<evidence type="ECO:0000269" key="7">
    <source>
    </source>
</evidence>
<evidence type="ECO:0000269" key="8">
    <source>
    </source>
</evidence>
<evidence type="ECO:0000269" key="9">
    <source>
    </source>
</evidence>
<evidence type="ECO:0000269" key="10">
    <source>
    </source>
</evidence>
<evidence type="ECO:0000269" key="11">
    <source>
    </source>
</evidence>
<evidence type="ECO:0000269" key="12">
    <source>
    </source>
</evidence>
<evidence type="ECO:0000303" key="13">
    <source>
    </source>
</evidence>
<evidence type="ECO:0000305" key="14"/>
<evidence type="ECO:0000312" key="15">
    <source>
        <dbReference type="MGI" id="MGI:1859547"/>
    </source>
</evidence>
<evidence type="ECO:0007744" key="16">
    <source>
    </source>
</evidence>
<name>SYT11_MOUSE</name>
<sequence length="430" mass="48333">MAEITNIRPSFDVSPVAAGLIGASVLVVCVSVTVFVWTCCHQQAEKKHKTPPYKFIHMLKGISIYPETLSNKKKIIKVRRDKDGPRRESGRGNLLINAESGLLSHDKDPRGPSPASCMDQLPIKRDYGEELRSPMTSLTPGESKATSPSSPEEDVMLGSLTFSVDYNFPKKALVVTIQEAHGLPVMDDQTQGSDPYIKMTILPDKRHRVKTRVLRKTLDPVFDETFTFYGIPYSQLQDLVLHFLVLSFDRFSRDDVIGEVMVPLAGVDPSTGKVQLTRDIIKRNIQKCISRGELQVSLSYQPVAQRMTVVVLKARHLPKMDITGLSGNPYVKVNVYYGRKRIAKKKTHVKKCTLNPVFNESFIYDIPTDLLPDISIEFLVIDFDRTTKNEVVGRLILGAHSVTTSGAEHWREVCESPRKPIAKWHSLSEY</sequence>
<organism>
    <name type="scientific">Mus musculus</name>
    <name type="common">Mouse</name>
    <dbReference type="NCBI Taxonomy" id="10090"/>
    <lineage>
        <taxon>Eukaryota</taxon>
        <taxon>Metazoa</taxon>
        <taxon>Chordata</taxon>
        <taxon>Craniata</taxon>
        <taxon>Vertebrata</taxon>
        <taxon>Euteleostomi</taxon>
        <taxon>Mammalia</taxon>
        <taxon>Eutheria</taxon>
        <taxon>Euarchontoglires</taxon>
        <taxon>Glires</taxon>
        <taxon>Rodentia</taxon>
        <taxon>Myomorpha</taxon>
        <taxon>Muroidea</taxon>
        <taxon>Muridae</taxon>
        <taxon>Murinae</taxon>
        <taxon>Mus</taxon>
        <taxon>Mus</taxon>
    </lineage>
</organism>
<gene>
    <name evidence="15" type="primary">Syt11</name>
</gene>
<comment type="function">
    <text evidence="6 8 9 10 11 12 14">Synaptotagmin family member involved in vesicular and membrane trafficking which does not bind Ca(2+) (Probable). Inhibits clathrin-mediated and bulk endocytosis, functions to ensure precision in vesicle retrieval (PubMed:29311685). Plays an important role in dopamine transmission by regulating endocytosis and the vesicle-recycling process (PubMed:29311685). Essential component of a neuronal vesicular trafficking pathway that differs from the synaptic vesicle trafficking pathway but is crucial for development and synaptic plasticity (PubMed:30808661). In macrophages and microglia, inhibits the conventional cytokine secretion, of at least IL6 and TNF, and phagocytosis (PubMed:23303671, PubMed:28686317). In astrocytes, regulates lysosome exocytosis, mechanism required for the repair of injured astrocyte cell membrane (PubMed:26450452). Required for the ATP13A2-mediated regulation of the autophagy-lysosome pathway (PubMed:27278822).</text>
</comment>
<comment type="cofactor">
    <cofactor evidence="4">
        <name>Ca(2+)</name>
        <dbReference type="ChEBI" id="CHEBI:29108"/>
    </cofactor>
</comment>
<comment type="subunit">
    <text evidence="2 7 12">Homodimer. Can also form heterodimers. Interacts with PRKN (By similarity). Interacts (via C2 2 domain) with AGO2 and SND1; the interaction with SND1 is direct (PubMed:24882364). Interacts with KIF1A; the interaction increases in presence of calcium (PubMed:30808661).</text>
</comment>
<comment type="interaction">
    <interactant intactId="EBI-647443">
        <id>Q9R0N3</id>
    </interactant>
    <interactant intactId="EBI-7573650">
        <id>Q9JI51</id>
        <label>Vti1a</label>
    </interactant>
    <organismsDiffer>true</organismsDiffer>
    <experiments>2</experiments>
</comment>
<comment type="subcellular location">
    <subcellularLocation>
        <location evidence="12">Cytoplasmic vesicle membrane</location>
        <topology evidence="14">Single-pass membrane protein</topology>
    </subcellularLocation>
    <subcellularLocation>
        <location evidence="12">Perikaryon</location>
    </subcellularLocation>
    <subcellularLocation>
        <location evidence="10">Golgi apparatus</location>
        <location evidence="10">trans-Golgi network membrane</location>
        <topology evidence="14">Single-pass membrane protein</topology>
    </subcellularLocation>
    <subcellularLocation>
        <location evidence="6 10">Recycling endosome membrane</location>
        <topology evidence="14">Single-pass membrane protein</topology>
    </subcellularLocation>
    <subcellularLocation>
        <location evidence="6 8 10">Lysosome membrane</location>
        <topology evidence="14">Single-pass membrane protein</topology>
    </subcellularLocation>
    <subcellularLocation>
        <location evidence="6 10">Cytoplasmic vesicle</location>
        <location evidence="6 10">Phagosome</location>
    </subcellularLocation>
    <subcellularLocation>
        <location evidence="12">Cell projection</location>
        <location evidence="12">Axon</location>
    </subcellularLocation>
    <subcellularLocation>
        <location evidence="12">Cell projection</location>
        <location evidence="12">Dendrite</location>
    </subcellularLocation>
    <subcellularLocation>
        <location evidence="12">Postsynaptic density</location>
    </subcellularLocation>
    <subcellularLocation>
        <location evidence="1">Recycling endosome membrane</location>
        <topology evidence="1">Single-pass membrane protein</topology>
    </subcellularLocation>
    <subcellularLocation>
        <location evidence="1">Cytoplasmic vesicle</location>
        <location evidence="1">Clathrin-coated vesicle membrane</location>
        <topology evidence="1">Single-pass membrane protein</topology>
    </subcellularLocation>
    <subcellularLocation>
        <location evidence="1">Perikaryon</location>
    </subcellularLocation>
    <text evidence="6 10 12">Localized in vesicles that travels in axonal and dendritic shafts in both anterograde and retrograde directions (PubMed:30808661). In macrophages and microglia, recruited in phagosomes at early stages of phagocytosis (PubMed:23303671, PubMed:28686317).</text>
</comment>
<comment type="tissue specificity">
    <text evidence="6 8 10 12">Expressed in cerebellun, cerebellar cortex, hippocampus, olfactory bulb and spinal cord (at protein level) (PubMed:30808661). Expressed by neurons, astrocytes and microglia (at protein level) (PubMed:26450452, PubMed:28686317). Expressed in macrophages (at protein level) (PubMed:23303671).</text>
</comment>
<comment type="developmental stage">
    <text evidence="12">Abundant across the brain, expression increases progressively over the first 2 weeks after birth.</text>
</comment>
<comment type="domain">
    <text evidence="1">The second C2 domain/C2B is required for the inhibitory role in both clathrin-mediated and bulk endocytosis. The transmembrane domain and the first C2 domain/C2A are critical for the inhibitory role in clathrin-mediated endocytosis or bulk endocytosis, respectively.</text>
</comment>
<comment type="domain">
    <text evidence="1">Unlike in other synaptotagmin family members, the first C2 domain/C2A does not bind Ca(2+) neither mediates Ca(2+)-dependent phospholipid binding. An aspartate-to-serine substitution in this domain inactivates Ca(2+)/phospho-lipid binding.</text>
</comment>
<comment type="PTM">
    <text evidence="2">Ubiquitinated, at least by PRKN, and targeted to the proteasome complex for degradation. Ubiquitination is inhibited by ATP13A2.</text>
</comment>
<comment type="disruption phenotype">
    <text evidence="11 12">Knockout is lethal (PubMed:30808661). Conditional knockout mice for dopaminergic neurons show increased dopamine release, accelerated vesicle pools replenishment and enlarged releasable vesicle pools in the striatum (PubMed:29311685). Forebrain-specific conditional knockouts are viable, fertile and have normal life span. They show impaired learning an memory (PubMed:30808661).</text>
</comment>
<comment type="similarity">
    <text evidence="14">Belongs to the synaptotagmin family.</text>
</comment>
<protein>
    <recommendedName>
        <fullName evidence="14">Synaptotagmin-11</fullName>
    </recommendedName>
    <alternativeName>
        <fullName evidence="13">Synaptotagmin XI</fullName>
        <shortName>SytXI</shortName>
    </alternativeName>
</protein>
<proteinExistence type="evidence at protein level"/>
<keyword id="KW-0106">Calcium</keyword>
<keyword id="KW-0966">Cell projection</keyword>
<keyword id="KW-0968">Cytoplasmic vesicle</keyword>
<keyword id="KW-0967">Endosome</keyword>
<keyword id="KW-0333">Golgi apparatus</keyword>
<keyword id="KW-0458">Lysosome</keyword>
<keyword id="KW-0472">Membrane</keyword>
<keyword id="KW-0479">Metal-binding</keyword>
<keyword id="KW-0597">Phosphoprotein</keyword>
<keyword id="KW-1185">Reference proteome</keyword>
<keyword id="KW-0677">Repeat</keyword>
<keyword id="KW-0770">Synapse</keyword>
<keyword id="KW-0812">Transmembrane</keyword>
<keyword id="KW-1133">Transmembrane helix</keyword>
<keyword id="KW-0832">Ubl conjugation</keyword>
<accession>Q9R0N3</accession>
<accession>Q7TQG8</accession>
<dbReference type="EMBL" id="AB026808">
    <property type="protein sequence ID" value="BAA85780.1"/>
    <property type="molecule type" value="mRNA"/>
</dbReference>
<dbReference type="EMBL" id="AK144169">
    <property type="protein sequence ID" value="BAE25745.1"/>
    <property type="molecule type" value="mRNA"/>
</dbReference>
<dbReference type="EMBL" id="BC054526">
    <property type="protein sequence ID" value="AAH54526.1"/>
    <property type="molecule type" value="mRNA"/>
</dbReference>
<dbReference type="CCDS" id="CCDS38484.1"/>
<dbReference type="RefSeq" id="NP_061274.2">
    <property type="nucleotide sequence ID" value="NM_018804.3"/>
</dbReference>
<dbReference type="RefSeq" id="XP_006501411.1">
    <property type="nucleotide sequence ID" value="XM_006501348.1"/>
</dbReference>
<dbReference type="RefSeq" id="XP_030108436.1">
    <property type="nucleotide sequence ID" value="XM_030252576.1"/>
</dbReference>
<dbReference type="SMR" id="Q9R0N3"/>
<dbReference type="BioGRID" id="230854">
    <property type="interactions" value="7"/>
</dbReference>
<dbReference type="FunCoup" id="Q9R0N3">
    <property type="interactions" value="945"/>
</dbReference>
<dbReference type="IntAct" id="Q9R0N3">
    <property type="interactions" value="23"/>
</dbReference>
<dbReference type="MINT" id="Q9R0N3"/>
<dbReference type="STRING" id="10090.ENSMUSP00000103129"/>
<dbReference type="iPTMnet" id="Q9R0N3"/>
<dbReference type="PhosphoSitePlus" id="Q9R0N3"/>
<dbReference type="SwissPalm" id="Q9R0N3"/>
<dbReference type="PaxDb" id="10090-ENSMUSP00000103129"/>
<dbReference type="ProteomicsDB" id="263193"/>
<dbReference type="Antibodypedia" id="34201">
    <property type="antibodies" value="204 antibodies from 29 providers"/>
</dbReference>
<dbReference type="DNASU" id="229521"/>
<dbReference type="Ensembl" id="ENSMUST00000090945.5">
    <property type="protein sequence ID" value="ENSMUSP00000088464.5"/>
    <property type="gene ID" value="ENSMUSG00000068923.15"/>
</dbReference>
<dbReference type="Ensembl" id="ENSMUST00000107505.8">
    <property type="protein sequence ID" value="ENSMUSP00000103129.2"/>
    <property type="gene ID" value="ENSMUSG00000068923.15"/>
</dbReference>
<dbReference type="GeneID" id="229521"/>
<dbReference type="KEGG" id="mmu:229521"/>
<dbReference type="UCSC" id="uc008pwk.1">
    <property type="organism name" value="mouse"/>
</dbReference>
<dbReference type="AGR" id="MGI:1859547"/>
<dbReference type="CTD" id="23208"/>
<dbReference type="MGI" id="MGI:1859547">
    <property type="gene designation" value="Syt11"/>
</dbReference>
<dbReference type="VEuPathDB" id="HostDB:ENSMUSG00000068923"/>
<dbReference type="eggNOG" id="KOG1028">
    <property type="taxonomic scope" value="Eukaryota"/>
</dbReference>
<dbReference type="GeneTree" id="ENSGT00940000159088"/>
<dbReference type="InParanoid" id="Q9R0N3"/>
<dbReference type="OMA" id="MDEQNQG"/>
<dbReference type="OrthoDB" id="270970at2759"/>
<dbReference type="PhylomeDB" id="Q9R0N3"/>
<dbReference type="TreeFam" id="TF315600"/>
<dbReference type="Reactome" id="R-MMU-8856825">
    <property type="pathway name" value="Cargo recognition for clathrin-mediated endocytosis"/>
</dbReference>
<dbReference type="Reactome" id="R-MMU-8856828">
    <property type="pathway name" value="Clathrin-mediated endocytosis"/>
</dbReference>
<dbReference type="BioGRID-ORCS" id="229521">
    <property type="hits" value="5 hits in 79 CRISPR screens"/>
</dbReference>
<dbReference type="CD-CODE" id="CE726F99">
    <property type="entry name" value="Postsynaptic density"/>
</dbReference>
<dbReference type="ChiTaRS" id="Syt11">
    <property type="organism name" value="mouse"/>
</dbReference>
<dbReference type="PRO" id="PR:Q9R0N3"/>
<dbReference type="Proteomes" id="UP000000589">
    <property type="component" value="Chromosome 3"/>
</dbReference>
<dbReference type="RNAct" id="Q9R0N3">
    <property type="molecule type" value="protein"/>
</dbReference>
<dbReference type="Bgee" id="ENSMUSG00000068923">
    <property type="expression patterns" value="Expressed in motor neuron and 253 other cell types or tissues"/>
</dbReference>
<dbReference type="ExpressionAtlas" id="Q9R0N3">
    <property type="expression patterns" value="baseline and differential"/>
</dbReference>
<dbReference type="GO" id="GO:0030424">
    <property type="term" value="C:axon"/>
    <property type="evidence" value="ECO:0007669"/>
    <property type="project" value="UniProtKB-SubCell"/>
</dbReference>
<dbReference type="GO" id="GO:0030665">
    <property type="term" value="C:clathrin-coated vesicle membrane"/>
    <property type="evidence" value="ECO:0007669"/>
    <property type="project" value="UniProtKB-SubCell"/>
</dbReference>
<dbReference type="GO" id="GO:0005737">
    <property type="term" value="C:cytoplasm"/>
    <property type="evidence" value="ECO:0000314"/>
    <property type="project" value="ParkinsonsUK-UCL"/>
</dbReference>
<dbReference type="GO" id="GO:0030425">
    <property type="term" value="C:dendrite"/>
    <property type="evidence" value="ECO:0000314"/>
    <property type="project" value="UniProtKB"/>
</dbReference>
<dbReference type="GO" id="GO:0098691">
    <property type="term" value="C:dopaminergic synapse"/>
    <property type="evidence" value="ECO:0000314"/>
    <property type="project" value="SynGO"/>
</dbReference>
<dbReference type="GO" id="GO:0032009">
    <property type="term" value="C:early phagosome"/>
    <property type="evidence" value="ECO:0000314"/>
    <property type="project" value="UniProtKB"/>
</dbReference>
<dbReference type="GO" id="GO:0005765">
    <property type="term" value="C:lysosomal membrane"/>
    <property type="evidence" value="ECO:0007669"/>
    <property type="project" value="UniProtKB-SubCell"/>
</dbReference>
<dbReference type="GO" id="GO:0005764">
    <property type="term" value="C:lysosome"/>
    <property type="evidence" value="ECO:0000314"/>
    <property type="project" value="UniProtKB"/>
</dbReference>
<dbReference type="GO" id="GO:0043204">
    <property type="term" value="C:perikaryon"/>
    <property type="evidence" value="ECO:0007669"/>
    <property type="project" value="UniProtKB-SubCell"/>
</dbReference>
<dbReference type="GO" id="GO:0001891">
    <property type="term" value="C:phagocytic cup"/>
    <property type="evidence" value="ECO:0000314"/>
    <property type="project" value="ParkinsonsUK-UCL"/>
</dbReference>
<dbReference type="GO" id="GO:0045335">
    <property type="term" value="C:phagocytic vesicle"/>
    <property type="evidence" value="ECO:0000314"/>
    <property type="project" value="ParkinsonsUK-UCL"/>
</dbReference>
<dbReference type="GO" id="GO:0005886">
    <property type="term" value="C:plasma membrane"/>
    <property type="evidence" value="ECO:0000314"/>
    <property type="project" value="MGI"/>
</dbReference>
<dbReference type="GO" id="GO:0014069">
    <property type="term" value="C:postsynaptic density"/>
    <property type="evidence" value="ECO:0000314"/>
    <property type="project" value="UniProtKB"/>
</dbReference>
<dbReference type="GO" id="GO:0055037">
    <property type="term" value="C:recycling endosome"/>
    <property type="evidence" value="ECO:0000314"/>
    <property type="project" value="UniProtKB"/>
</dbReference>
<dbReference type="GO" id="GO:0055038">
    <property type="term" value="C:recycling endosome membrane"/>
    <property type="evidence" value="ECO:0007669"/>
    <property type="project" value="UniProtKB-SubCell"/>
</dbReference>
<dbReference type="GO" id="GO:0005802">
    <property type="term" value="C:trans-Golgi network"/>
    <property type="evidence" value="ECO:0000314"/>
    <property type="project" value="UniProtKB"/>
</dbReference>
<dbReference type="GO" id="GO:0031982">
    <property type="term" value="C:vesicle"/>
    <property type="evidence" value="ECO:0000314"/>
    <property type="project" value="UniProtKB"/>
</dbReference>
<dbReference type="GO" id="GO:0048487">
    <property type="term" value="F:beta-tubulin binding"/>
    <property type="evidence" value="ECO:0000353"/>
    <property type="project" value="ParkinsonsUK-UCL"/>
</dbReference>
<dbReference type="GO" id="GO:0042802">
    <property type="term" value="F:identical protein binding"/>
    <property type="evidence" value="ECO:0000353"/>
    <property type="project" value="ParkinsonsUK-UCL"/>
</dbReference>
<dbReference type="GO" id="GO:0046872">
    <property type="term" value="F:metal ion binding"/>
    <property type="evidence" value="ECO:0007669"/>
    <property type="project" value="UniProtKB-KW"/>
</dbReference>
<dbReference type="GO" id="GO:0000149">
    <property type="term" value="F:SNARE binding"/>
    <property type="evidence" value="ECO:0000353"/>
    <property type="project" value="ParkinsonsUK-UCL"/>
</dbReference>
<dbReference type="GO" id="GO:0031369">
    <property type="term" value="F:translation initiation factor binding"/>
    <property type="evidence" value="ECO:0000353"/>
    <property type="project" value="ParkinsonsUK-UCL"/>
</dbReference>
<dbReference type="GO" id="GO:0031625">
    <property type="term" value="F:ubiquitin protein ligase binding"/>
    <property type="evidence" value="ECO:0007669"/>
    <property type="project" value="Ensembl"/>
</dbReference>
<dbReference type="GO" id="GO:0006914">
    <property type="term" value="P:autophagy"/>
    <property type="evidence" value="ECO:0000315"/>
    <property type="project" value="UniProtKB"/>
</dbReference>
<dbReference type="GO" id="GO:1990927">
    <property type="term" value="P:calcium ion regulated lysosome exocytosis"/>
    <property type="evidence" value="ECO:0000315"/>
    <property type="project" value="ParkinsonsUK-UCL"/>
</dbReference>
<dbReference type="GO" id="GO:0051650">
    <property type="term" value="P:establishment of vesicle localization"/>
    <property type="evidence" value="ECO:0000315"/>
    <property type="project" value="UniProtKB"/>
</dbReference>
<dbReference type="GO" id="GO:0007612">
    <property type="term" value="P:learning"/>
    <property type="evidence" value="ECO:0000315"/>
    <property type="project" value="UniProtKB"/>
</dbReference>
<dbReference type="GO" id="GO:0007613">
    <property type="term" value="P:memory"/>
    <property type="evidence" value="ECO:0000315"/>
    <property type="project" value="UniProtKB"/>
</dbReference>
<dbReference type="GO" id="GO:0001818">
    <property type="term" value="P:negative regulation of cytokine production"/>
    <property type="evidence" value="ECO:0000314"/>
    <property type="project" value="UniProtKB"/>
</dbReference>
<dbReference type="GO" id="GO:0033602">
    <property type="term" value="P:negative regulation of dopamine secretion"/>
    <property type="evidence" value="ECO:0000314"/>
    <property type="project" value="UniProtKB"/>
</dbReference>
<dbReference type="GO" id="GO:0045806">
    <property type="term" value="P:negative regulation of endocytosis"/>
    <property type="evidence" value="ECO:0000314"/>
    <property type="project" value="UniProtKB"/>
</dbReference>
<dbReference type="GO" id="GO:0032715">
    <property type="term" value="P:negative regulation of interleukin-6 production"/>
    <property type="evidence" value="ECO:0000314"/>
    <property type="project" value="UniProtKB"/>
</dbReference>
<dbReference type="GO" id="GO:1903979">
    <property type="term" value="P:negative regulation of microglial cell activation"/>
    <property type="evidence" value="ECO:0000314"/>
    <property type="project" value="UniProtKB"/>
</dbReference>
<dbReference type="GO" id="GO:0050765">
    <property type="term" value="P:negative regulation of phagocytosis"/>
    <property type="evidence" value="ECO:0000314"/>
    <property type="project" value="UniProtKB"/>
</dbReference>
<dbReference type="GO" id="GO:0032720">
    <property type="term" value="P:negative regulation of tumor necrosis factor production"/>
    <property type="evidence" value="ECO:0000314"/>
    <property type="project" value="UniProtKB"/>
</dbReference>
<dbReference type="GO" id="GO:0001778">
    <property type="term" value="P:plasma membrane repair"/>
    <property type="evidence" value="ECO:0000315"/>
    <property type="project" value="ParkinsonsUK-UCL"/>
</dbReference>
<dbReference type="GO" id="GO:1905171">
    <property type="term" value="P:positive regulation of protein localization to phagocytic vesicle"/>
    <property type="evidence" value="ECO:0000315"/>
    <property type="project" value="ParkinsonsUK-UCL"/>
</dbReference>
<dbReference type="GO" id="GO:1900424">
    <property type="term" value="P:regulation of defense response to bacterium"/>
    <property type="evidence" value="ECO:0000315"/>
    <property type="project" value="ParkinsonsUK-UCL"/>
</dbReference>
<dbReference type="GO" id="GO:1905162">
    <property type="term" value="P:regulation of phagosome maturation"/>
    <property type="evidence" value="ECO:0000304"/>
    <property type="project" value="ParkinsonsUK-UCL"/>
</dbReference>
<dbReference type="GO" id="GO:1900242">
    <property type="term" value="P:regulation of synaptic vesicle endocytosis"/>
    <property type="evidence" value="ECO:0000314"/>
    <property type="project" value="SynGO"/>
</dbReference>
<dbReference type="GO" id="GO:0009611">
    <property type="term" value="P:response to wounding"/>
    <property type="evidence" value="ECO:0000315"/>
    <property type="project" value="ParkinsonsUK-UCL"/>
</dbReference>
<dbReference type="CDD" id="cd08388">
    <property type="entry name" value="C2A_Synaptotagmin-4-11"/>
    <property type="match status" value="1"/>
</dbReference>
<dbReference type="CDD" id="cd08404">
    <property type="entry name" value="C2B_Synaptotagmin-4"/>
    <property type="match status" value="1"/>
</dbReference>
<dbReference type="FunFam" id="2.60.40.150:FF:000039">
    <property type="entry name" value="Synaptotagmin 11"/>
    <property type="match status" value="1"/>
</dbReference>
<dbReference type="FunFam" id="2.60.40.150:FF:000051">
    <property type="entry name" value="Synaptotagmin 11"/>
    <property type="match status" value="1"/>
</dbReference>
<dbReference type="Gene3D" id="2.60.40.150">
    <property type="entry name" value="C2 domain"/>
    <property type="match status" value="2"/>
</dbReference>
<dbReference type="InterPro" id="IPR000008">
    <property type="entry name" value="C2_dom"/>
</dbReference>
<dbReference type="InterPro" id="IPR035892">
    <property type="entry name" value="C2_domain_sf"/>
</dbReference>
<dbReference type="InterPro" id="IPR001565">
    <property type="entry name" value="Synaptotagmin"/>
</dbReference>
<dbReference type="PANTHER" id="PTHR10024">
    <property type="entry name" value="SYNAPTOTAGMIN"/>
    <property type="match status" value="1"/>
</dbReference>
<dbReference type="PANTHER" id="PTHR10024:SF115">
    <property type="entry name" value="SYNAPTOTAGMIN-11"/>
    <property type="match status" value="1"/>
</dbReference>
<dbReference type="Pfam" id="PF00168">
    <property type="entry name" value="C2"/>
    <property type="match status" value="2"/>
</dbReference>
<dbReference type="PRINTS" id="PR00399">
    <property type="entry name" value="SYNAPTOTAGMN"/>
</dbReference>
<dbReference type="SMART" id="SM00239">
    <property type="entry name" value="C2"/>
    <property type="match status" value="2"/>
</dbReference>
<dbReference type="SUPFAM" id="SSF49562">
    <property type="entry name" value="C2 domain (Calcium/lipid-binding domain, CaLB)"/>
    <property type="match status" value="2"/>
</dbReference>
<dbReference type="PROSITE" id="PS50004">
    <property type="entry name" value="C2"/>
    <property type="match status" value="2"/>
</dbReference>